<sequence length="319" mass="36934">MITFLPIIFSILIVVIFVIGNFANGFIALVNSIEWVKRQKISFADQILIALAVSRVGLLWALLLHWYATELNLAFYSVEVRITAYNVWAVTNHFSNWLATSLSMFYLLKIANFSNLIFLRIKRRVKSVILVILLGPLLFLVCHLFVINMNEIVWTKEYEGNLTWKIKLRNAVFLSNMTLTMLANFVPLTLTLISFLLLICSLCKHLKKMQLHGKGSQDPSTKVHIKALQTVTCFLLLCAIYFLSMIISVYNFGRLEKKPVFMFCQAITFSYPSTHAFILIWGNKKLKQIFLSVLWHVRYWVKDRSLRLHRFTRAALCKG</sequence>
<protein>
    <recommendedName>
        <fullName>Taste receptor type 2 member 30</fullName>
    </recommendedName>
    <alternativeName>
        <fullName>Taste receptor type 2 member 47</fullName>
        <shortName>T2R47</shortName>
    </alternativeName>
</protein>
<evidence type="ECO:0000250" key="1"/>
<evidence type="ECO:0000255" key="2"/>
<evidence type="ECO:0000305" key="3"/>
<proteinExistence type="inferred from homology"/>
<gene>
    <name type="primary">TAS2R30</name>
    <name type="synonym">TAS2R47</name>
</gene>
<feature type="chain" id="PRO_0000082326" description="Taste receptor type 2 member 30">
    <location>
        <begin position="1"/>
        <end position="319"/>
    </location>
</feature>
<feature type="topological domain" description="Extracellular" evidence="2">
    <location>
        <position position="1"/>
    </location>
</feature>
<feature type="transmembrane region" description="Helical; Name=1" evidence="2">
    <location>
        <begin position="2"/>
        <end position="22"/>
    </location>
</feature>
<feature type="topological domain" description="Cytoplasmic" evidence="2">
    <location>
        <begin position="23"/>
        <end position="46"/>
    </location>
</feature>
<feature type="transmembrane region" description="Helical; Name=2" evidence="2">
    <location>
        <begin position="47"/>
        <end position="67"/>
    </location>
</feature>
<feature type="topological domain" description="Extracellular" evidence="2">
    <location>
        <begin position="68"/>
        <end position="86"/>
    </location>
</feature>
<feature type="transmembrane region" description="Helical; Name=3" evidence="2">
    <location>
        <begin position="87"/>
        <end position="107"/>
    </location>
</feature>
<feature type="topological domain" description="Cytoplasmic" evidence="2">
    <location>
        <begin position="108"/>
        <end position="126"/>
    </location>
</feature>
<feature type="transmembrane region" description="Helical; Name=4" evidence="2">
    <location>
        <begin position="127"/>
        <end position="147"/>
    </location>
</feature>
<feature type="topological domain" description="Extracellular" evidence="2">
    <location>
        <begin position="148"/>
        <end position="178"/>
    </location>
</feature>
<feature type="transmembrane region" description="Helical; Name=5" evidence="2">
    <location>
        <begin position="179"/>
        <end position="199"/>
    </location>
</feature>
<feature type="topological domain" description="Cytoplasmic" evidence="2">
    <location>
        <begin position="200"/>
        <end position="229"/>
    </location>
</feature>
<feature type="transmembrane region" description="Helical; Name=6" evidence="2">
    <location>
        <begin position="230"/>
        <end position="250"/>
    </location>
</feature>
<feature type="topological domain" description="Extracellular" evidence="2">
    <location>
        <begin position="251"/>
        <end position="259"/>
    </location>
</feature>
<feature type="transmembrane region" description="Helical; Name=7" evidence="2">
    <location>
        <begin position="260"/>
        <end position="280"/>
    </location>
</feature>
<feature type="topological domain" description="Cytoplasmic" evidence="2">
    <location>
        <begin position="281"/>
        <end position="319"/>
    </location>
</feature>
<feature type="glycosylation site" description="N-linked (GlcNAc...) asparagine" evidence="2">
    <location>
        <position position="161"/>
    </location>
</feature>
<feature type="glycosylation site" description="N-linked (GlcNAc...) asparagine" evidence="2">
    <location>
        <position position="176"/>
    </location>
</feature>
<dbReference type="EMBL" id="AY724973">
    <property type="protein sequence ID" value="AAU21165.1"/>
    <property type="molecule type" value="Genomic_DNA"/>
</dbReference>
<dbReference type="SMR" id="Q645V4"/>
<dbReference type="GlyCosmos" id="Q645V4">
    <property type="glycosylation" value="2 sites, No reported glycans"/>
</dbReference>
<dbReference type="GO" id="GO:0005886">
    <property type="term" value="C:plasma membrane"/>
    <property type="evidence" value="ECO:0007669"/>
    <property type="project" value="UniProtKB-ARBA"/>
</dbReference>
<dbReference type="GO" id="GO:0033038">
    <property type="term" value="F:bitter taste receptor activity"/>
    <property type="evidence" value="ECO:0007669"/>
    <property type="project" value="InterPro"/>
</dbReference>
<dbReference type="GO" id="GO:0004930">
    <property type="term" value="F:G protein-coupled receptor activity"/>
    <property type="evidence" value="ECO:0007669"/>
    <property type="project" value="UniProtKB-KW"/>
</dbReference>
<dbReference type="CDD" id="cd15027">
    <property type="entry name" value="7tm_TAS2R43-like"/>
    <property type="match status" value="1"/>
</dbReference>
<dbReference type="FunFam" id="1.20.1070.10:FF:000042">
    <property type="entry name" value="Taste receptor type 2 member 7"/>
    <property type="match status" value="1"/>
</dbReference>
<dbReference type="Gene3D" id="1.20.1070.10">
    <property type="entry name" value="Rhodopsin 7-helix transmembrane proteins"/>
    <property type="match status" value="1"/>
</dbReference>
<dbReference type="InterPro" id="IPR007960">
    <property type="entry name" value="TAS2R"/>
</dbReference>
<dbReference type="PANTHER" id="PTHR11394">
    <property type="entry name" value="TASTE RECEPTOR TYPE 2"/>
    <property type="match status" value="1"/>
</dbReference>
<dbReference type="PANTHER" id="PTHR11394:SF48">
    <property type="entry name" value="TASTE RECEPTOR TYPE 2 MEMBER 30"/>
    <property type="match status" value="1"/>
</dbReference>
<dbReference type="Pfam" id="PF05296">
    <property type="entry name" value="TAS2R"/>
    <property type="match status" value="1"/>
</dbReference>
<dbReference type="SUPFAM" id="SSF81321">
    <property type="entry name" value="Family A G protein-coupled receptor-like"/>
    <property type="match status" value="1"/>
</dbReference>
<organism>
    <name type="scientific">Pongo pygmaeus</name>
    <name type="common">Bornean orangutan</name>
    <dbReference type="NCBI Taxonomy" id="9600"/>
    <lineage>
        <taxon>Eukaryota</taxon>
        <taxon>Metazoa</taxon>
        <taxon>Chordata</taxon>
        <taxon>Craniata</taxon>
        <taxon>Vertebrata</taxon>
        <taxon>Euteleostomi</taxon>
        <taxon>Mammalia</taxon>
        <taxon>Eutheria</taxon>
        <taxon>Euarchontoglires</taxon>
        <taxon>Primates</taxon>
        <taxon>Haplorrhini</taxon>
        <taxon>Catarrhini</taxon>
        <taxon>Hominidae</taxon>
        <taxon>Pongo</taxon>
    </lineage>
</organism>
<keyword id="KW-0297">G-protein coupled receptor</keyword>
<keyword id="KW-0325">Glycoprotein</keyword>
<keyword id="KW-0472">Membrane</keyword>
<keyword id="KW-0675">Receptor</keyword>
<keyword id="KW-0716">Sensory transduction</keyword>
<keyword id="KW-0919">Taste</keyword>
<keyword id="KW-0807">Transducer</keyword>
<keyword id="KW-0812">Transmembrane</keyword>
<keyword id="KW-1133">Transmembrane helix</keyword>
<accession>Q645V4</accession>
<reference key="1">
    <citation type="journal article" date="2005" name="Mol. Biol. Evol.">
        <title>Evolution of bitter taste receptors in humans and apes.</title>
        <authorList>
            <person name="Fischer A."/>
            <person name="Gilad Y."/>
            <person name="Man O."/>
            <person name="Paeaebo S."/>
        </authorList>
    </citation>
    <scope>NUCLEOTIDE SEQUENCE [GENOMIC DNA]</scope>
</reference>
<comment type="function">
    <text evidence="1">Receptor that may play a role in the perception of bitterness and is gustducin-linked. May play a role in sensing the chemical composition of the gastrointestinal content. The activity of this receptor may stimulate alpha gustducin, mediate PLC-beta-2 activation and lead to the gating of TRPM5 (By similarity).</text>
</comment>
<comment type="subcellular location">
    <subcellularLocation>
        <location>Membrane</location>
        <topology>Multi-pass membrane protein</topology>
    </subcellularLocation>
</comment>
<comment type="miscellaneous">
    <text>Most taste cells may be activated by a limited number of bitter compounds; individual taste cells can discriminate among bitter stimuli.</text>
</comment>
<comment type="similarity">
    <text evidence="3">Belongs to the G-protein coupled receptor T2R family.</text>
</comment>
<name>T2R30_PONPY</name>